<comment type="function">
    <text evidence="1">Binds directly to 23S rRNA. The L1 stalk is quite mobile in the ribosome, and is involved in E site tRNA release.</text>
</comment>
<comment type="function">
    <text evidence="1">Protein L1 is also a translational repressor protein, it controls the translation of the L11 operon by binding to its mRNA.</text>
</comment>
<comment type="subunit">
    <text evidence="1">Part of the 50S ribosomal subunit.</text>
</comment>
<comment type="similarity">
    <text evidence="1">Belongs to the universal ribosomal protein uL1 family.</text>
</comment>
<reference key="1">
    <citation type="journal article" date="2010" name="Genome Biol.">
        <title>Structure and dynamics of the pan-genome of Streptococcus pneumoniae and closely related species.</title>
        <authorList>
            <person name="Donati C."/>
            <person name="Hiller N.L."/>
            <person name="Tettelin H."/>
            <person name="Muzzi A."/>
            <person name="Croucher N.J."/>
            <person name="Angiuoli S.V."/>
            <person name="Oggioni M."/>
            <person name="Dunning Hotopp J.C."/>
            <person name="Hu F.Z."/>
            <person name="Riley D.R."/>
            <person name="Covacci A."/>
            <person name="Mitchell T.J."/>
            <person name="Bentley S.D."/>
            <person name="Kilian M."/>
            <person name="Ehrlich G.D."/>
            <person name="Rappuoli R."/>
            <person name="Moxon E.R."/>
            <person name="Masignani V."/>
        </authorList>
    </citation>
    <scope>NUCLEOTIDE SEQUENCE [LARGE SCALE GENOMIC DNA]</scope>
    <source>
        <strain>JJA</strain>
    </source>
</reference>
<name>RL1_STRZJ</name>
<organism>
    <name type="scientific">Streptococcus pneumoniae (strain JJA)</name>
    <dbReference type="NCBI Taxonomy" id="488222"/>
    <lineage>
        <taxon>Bacteria</taxon>
        <taxon>Bacillati</taxon>
        <taxon>Bacillota</taxon>
        <taxon>Bacilli</taxon>
        <taxon>Lactobacillales</taxon>
        <taxon>Streptococcaceae</taxon>
        <taxon>Streptococcus</taxon>
    </lineage>
</organism>
<sequence length="229" mass="24523">MAKKSKQLRAALEKIDSTKAYSVEEAVALAKETNFAKFDATVEVAYNLNIDVKKADQQIRGAMVLPNGTGKTSRVLVFARGAKAEEAKVAGADFVGEDDLVAKINDGWLDFDVVIATPDMMALVGRLGRVLGPRNLMPNPKTGTVTMDVAKAVEESKGGKITYRADRAGNVQAIIGKVSFEAEKLVENFKAFNETIQKAKPATAKGTYVTNLTITTTQGVGIKVDVNSL</sequence>
<gene>
    <name evidence="1" type="primary">rplA</name>
    <name type="ordered locus">SPJ_0583</name>
</gene>
<protein>
    <recommendedName>
        <fullName evidence="1">Large ribosomal subunit protein uL1</fullName>
    </recommendedName>
    <alternativeName>
        <fullName evidence="2">50S ribosomal protein L1</fullName>
    </alternativeName>
</protein>
<proteinExistence type="inferred from homology"/>
<dbReference type="EMBL" id="CP000919">
    <property type="protein sequence ID" value="ACO20019.1"/>
    <property type="molecule type" value="Genomic_DNA"/>
</dbReference>
<dbReference type="RefSeq" id="WP_001085681.1">
    <property type="nucleotide sequence ID" value="NC_012466.1"/>
</dbReference>
<dbReference type="SMR" id="C1CD03"/>
<dbReference type="KEGG" id="sjj:SPJ_0583"/>
<dbReference type="HOGENOM" id="CLU_062853_0_0_9"/>
<dbReference type="Proteomes" id="UP000002206">
    <property type="component" value="Chromosome"/>
</dbReference>
<dbReference type="GO" id="GO:0015934">
    <property type="term" value="C:large ribosomal subunit"/>
    <property type="evidence" value="ECO:0007669"/>
    <property type="project" value="InterPro"/>
</dbReference>
<dbReference type="GO" id="GO:0019843">
    <property type="term" value="F:rRNA binding"/>
    <property type="evidence" value="ECO:0007669"/>
    <property type="project" value="UniProtKB-UniRule"/>
</dbReference>
<dbReference type="GO" id="GO:0003735">
    <property type="term" value="F:structural constituent of ribosome"/>
    <property type="evidence" value="ECO:0007669"/>
    <property type="project" value="InterPro"/>
</dbReference>
<dbReference type="GO" id="GO:0000049">
    <property type="term" value="F:tRNA binding"/>
    <property type="evidence" value="ECO:0007669"/>
    <property type="project" value="UniProtKB-KW"/>
</dbReference>
<dbReference type="GO" id="GO:0006417">
    <property type="term" value="P:regulation of translation"/>
    <property type="evidence" value="ECO:0007669"/>
    <property type="project" value="UniProtKB-KW"/>
</dbReference>
<dbReference type="GO" id="GO:0006412">
    <property type="term" value="P:translation"/>
    <property type="evidence" value="ECO:0007669"/>
    <property type="project" value="UniProtKB-UniRule"/>
</dbReference>
<dbReference type="CDD" id="cd00403">
    <property type="entry name" value="Ribosomal_L1"/>
    <property type="match status" value="1"/>
</dbReference>
<dbReference type="FunFam" id="3.40.50.790:FF:000001">
    <property type="entry name" value="50S ribosomal protein L1"/>
    <property type="match status" value="1"/>
</dbReference>
<dbReference type="Gene3D" id="3.30.190.20">
    <property type="match status" value="1"/>
</dbReference>
<dbReference type="Gene3D" id="3.40.50.790">
    <property type="match status" value="1"/>
</dbReference>
<dbReference type="HAMAP" id="MF_01318_B">
    <property type="entry name" value="Ribosomal_uL1_B"/>
    <property type="match status" value="1"/>
</dbReference>
<dbReference type="InterPro" id="IPR005878">
    <property type="entry name" value="Ribosom_uL1_bac-type"/>
</dbReference>
<dbReference type="InterPro" id="IPR002143">
    <property type="entry name" value="Ribosomal_uL1"/>
</dbReference>
<dbReference type="InterPro" id="IPR023674">
    <property type="entry name" value="Ribosomal_uL1-like"/>
</dbReference>
<dbReference type="InterPro" id="IPR028364">
    <property type="entry name" value="Ribosomal_uL1/biogenesis"/>
</dbReference>
<dbReference type="InterPro" id="IPR016095">
    <property type="entry name" value="Ribosomal_uL1_3-a/b-sand"/>
</dbReference>
<dbReference type="InterPro" id="IPR023673">
    <property type="entry name" value="Ribosomal_uL1_CS"/>
</dbReference>
<dbReference type="NCBIfam" id="TIGR01169">
    <property type="entry name" value="rplA_bact"/>
    <property type="match status" value="1"/>
</dbReference>
<dbReference type="PANTHER" id="PTHR36427">
    <property type="entry name" value="54S RIBOSOMAL PROTEIN L1, MITOCHONDRIAL"/>
    <property type="match status" value="1"/>
</dbReference>
<dbReference type="PANTHER" id="PTHR36427:SF3">
    <property type="entry name" value="LARGE RIBOSOMAL SUBUNIT PROTEIN UL1M"/>
    <property type="match status" value="1"/>
</dbReference>
<dbReference type="Pfam" id="PF00687">
    <property type="entry name" value="Ribosomal_L1"/>
    <property type="match status" value="1"/>
</dbReference>
<dbReference type="PIRSF" id="PIRSF002155">
    <property type="entry name" value="Ribosomal_L1"/>
    <property type="match status" value="1"/>
</dbReference>
<dbReference type="SUPFAM" id="SSF56808">
    <property type="entry name" value="Ribosomal protein L1"/>
    <property type="match status" value="1"/>
</dbReference>
<dbReference type="PROSITE" id="PS01199">
    <property type="entry name" value="RIBOSOMAL_L1"/>
    <property type="match status" value="1"/>
</dbReference>
<evidence type="ECO:0000255" key="1">
    <source>
        <dbReference type="HAMAP-Rule" id="MF_01318"/>
    </source>
</evidence>
<evidence type="ECO:0000305" key="2"/>
<keyword id="KW-0678">Repressor</keyword>
<keyword id="KW-0687">Ribonucleoprotein</keyword>
<keyword id="KW-0689">Ribosomal protein</keyword>
<keyword id="KW-0694">RNA-binding</keyword>
<keyword id="KW-0699">rRNA-binding</keyword>
<keyword id="KW-0810">Translation regulation</keyword>
<keyword id="KW-0820">tRNA-binding</keyword>
<feature type="chain" id="PRO_1000165704" description="Large ribosomal subunit protein uL1">
    <location>
        <begin position="1"/>
        <end position="229"/>
    </location>
</feature>
<accession>C1CD03</accession>